<gene>
    <name type="primary">WAG1</name>
    <name type="synonym">PK3</name>
    <name type="ordered locus">At1g53700</name>
    <name type="ORF">F22G10.21</name>
</gene>
<sequence>MEDDGYYLDTDLDLSFTSTATDRTFTSSSARSSLARSSLTLSFNDRLSTATTPSTTTSSAATTLHHRRYDPHWTSIRAATTLSSDGRLHLRHFKLVRHLGTGNLGRVFLCHLRDCPNPTGFALKVIDRDVLTAKKISHVETEAEILSLLDHPFLPTLYARIDASHYTCLLIDYCPNGDLHSLLRKQPNNRLPISPVRFFAAEVLVALEYLHALGIVYRDLKPENILIREDGHIMLSDFDLCFKADVVPTFRSRRFRRTSSSPRKTRRGGGCFSTEVEYEREEIVAEFAAEPVTAFSKSCVGTHEYLAPELVAGNGHGSGVDWWAFGIFLYEMLYGTTPFKGGTKEQTLRNIVSNDDVAFTLEEEGMVEAKDLIEKLLVKDPRKRLGCARGAQDIKRHEFFEGIKWPLIRNYKPPEIRGLVKKTKAHAGHVTAAVTPRRNKWLWWALSHLLRSKSLSKSSSKIQSNNNYYHYVGKKL</sequence>
<organism>
    <name type="scientific">Arabidopsis thaliana</name>
    <name type="common">Mouse-ear cress</name>
    <dbReference type="NCBI Taxonomy" id="3702"/>
    <lineage>
        <taxon>Eukaryota</taxon>
        <taxon>Viridiplantae</taxon>
        <taxon>Streptophyta</taxon>
        <taxon>Embryophyta</taxon>
        <taxon>Tracheophyta</taxon>
        <taxon>Spermatophyta</taxon>
        <taxon>Magnoliopsida</taxon>
        <taxon>eudicotyledons</taxon>
        <taxon>Gunneridae</taxon>
        <taxon>Pentapetalae</taxon>
        <taxon>rosids</taxon>
        <taxon>malvids</taxon>
        <taxon>Brassicales</taxon>
        <taxon>Brassicaceae</taxon>
        <taxon>Camelineae</taxon>
        <taxon>Arabidopsis</taxon>
    </lineage>
</organism>
<proteinExistence type="evidence at transcript level"/>
<protein>
    <recommendedName>
        <fullName>Serine/threonine-protein kinase WAG1</fullName>
        <ecNumber>2.7.11.1</ecNumber>
    </recommendedName>
    <alternativeName>
        <fullName>Protein kinase 3</fullName>
        <shortName>AtPK3</shortName>
    </alternativeName>
</protein>
<feature type="chain" id="PRO_0000425534" description="Serine/threonine-protein kinase WAG1">
    <location>
        <begin position="1"/>
        <end position="476"/>
    </location>
</feature>
<feature type="domain" description="Protein kinase" evidence="1">
    <location>
        <begin position="93"/>
        <end position="400"/>
    </location>
</feature>
<feature type="active site" description="Proton acceptor" evidence="1 2">
    <location>
        <position position="219"/>
    </location>
</feature>
<feature type="binding site" evidence="1">
    <location>
        <begin position="99"/>
        <end position="107"/>
    </location>
    <ligand>
        <name>ATP</name>
        <dbReference type="ChEBI" id="CHEBI:30616"/>
    </ligand>
</feature>
<feature type="binding site" evidence="1">
    <location>
        <position position="124"/>
    </location>
    <ligand>
        <name>ATP</name>
        <dbReference type="ChEBI" id="CHEBI:30616"/>
    </ligand>
</feature>
<feature type="sequence conflict" description="In Ref. 1; AAC78477." evidence="6" ref="1">
    <original>Y</original>
    <variation>F</variation>
    <location>
        <position position="278"/>
    </location>
</feature>
<keyword id="KW-0067">ATP-binding</keyword>
<keyword id="KW-0927">Auxin signaling pathway</keyword>
<keyword id="KW-0963">Cytoplasm</keyword>
<keyword id="KW-0217">Developmental protein</keyword>
<keyword id="KW-0341">Growth regulation</keyword>
<keyword id="KW-0418">Kinase</keyword>
<keyword id="KW-0547">Nucleotide-binding</keyword>
<keyword id="KW-1185">Reference proteome</keyword>
<keyword id="KW-0723">Serine/threonine-protein kinase</keyword>
<keyword id="KW-0808">Transferase</keyword>
<name>WAG1_ARATH</name>
<evidence type="ECO:0000255" key="1">
    <source>
        <dbReference type="PROSITE-ProRule" id="PRU00159"/>
    </source>
</evidence>
<evidence type="ECO:0000255" key="2">
    <source>
        <dbReference type="PROSITE-ProRule" id="PRU10027"/>
    </source>
</evidence>
<evidence type="ECO:0000269" key="3">
    <source>
    </source>
</evidence>
<evidence type="ECO:0000269" key="4">
    <source>
    </source>
</evidence>
<evidence type="ECO:0000269" key="5">
    <source>
    </source>
</evidence>
<evidence type="ECO:0000305" key="6"/>
<evidence type="ECO:0000305" key="7">
    <source>
    </source>
</evidence>
<reference key="1">
    <citation type="online journal article" date="1998" name="Plant Gene Register">
        <title>PK3At: an Arabidopsis homolog of the PsPK3 protein kinase from Pisum sativum L.</title>
        <authorList>
            <person name="Ma J."/>
            <person name="Khanna R."/>
            <person name="Fukasawa-Akada T."/>
            <person name="Poisso J."/>
            <person name="Deitzer G.F."/>
            <person name="Watson J.C."/>
        </authorList>
        <locator>PGR98-172</locator>
    </citation>
    <scope>NUCLEOTIDE SEQUENCE [GENOMIC DNA]</scope>
    <source>
        <strain>cv. Landsberg erecta</strain>
    </source>
</reference>
<reference key="2">
    <citation type="journal article" date="2000" name="Nature">
        <title>Sequence and analysis of chromosome 1 of the plant Arabidopsis thaliana.</title>
        <authorList>
            <person name="Theologis A."/>
            <person name="Ecker J.R."/>
            <person name="Palm C.J."/>
            <person name="Federspiel N.A."/>
            <person name="Kaul S."/>
            <person name="White O."/>
            <person name="Alonso J."/>
            <person name="Altafi H."/>
            <person name="Araujo R."/>
            <person name="Bowman C.L."/>
            <person name="Brooks S.Y."/>
            <person name="Buehler E."/>
            <person name="Chan A."/>
            <person name="Chao Q."/>
            <person name="Chen H."/>
            <person name="Cheuk R.F."/>
            <person name="Chin C.W."/>
            <person name="Chung M.K."/>
            <person name="Conn L."/>
            <person name="Conway A.B."/>
            <person name="Conway A.R."/>
            <person name="Creasy T.H."/>
            <person name="Dewar K."/>
            <person name="Dunn P."/>
            <person name="Etgu P."/>
            <person name="Feldblyum T.V."/>
            <person name="Feng J.-D."/>
            <person name="Fong B."/>
            <person name="Fujii C.Y."/>
            <person name="Gill J.E."/>
            <person name="Goldsmith A.D."/>
            <person name="Haas B."/>
            <person name="Hansen N.F."/>
            <person name="Hughes B."/>
            <person name="Huizar L."/>
            <person name="Hunter J.L."/>
            <person name="Jenkins J."/>
            <person name="Johnson-Hopson C."/>
            <person name="Khan S."/>
            <person name="Khaykin E."/>
            <person name="Kim C.J."/>
            <person name="Koo H.L."/>
            <person name="Kremenetskaia I."/>
            <person name="Kurtz D.B."/>
            <person name="Kwan A."/>
            <person name="Lam B."/>
            <person name="Langin-Hooper S."/>
            <person name="Lee A."/>
            <person name="Lee J.M."/>
            <person name="Lenz C.A."/>
            <person name="Li J.H."/>
            <person name="Li Y.-P."/>
            <person name="Lin X."/>
            <person name="Liu S.X."/>
            <person name="Liu Z.A."/>
            <person name="Luros J.S."/>
            <person name="Maiti R."/>
            <person name="Marziali A."/>
            <person name="Militscher J."/>
            <person name="Miranda M."/>
            <person name="Nguyen M."/>
            <person name="Nierman W.C."/>
            <person name="Osborne B.I."/>
            <person name="Pai G."/>
            <person name="Peterson J."/>
            <person name="Pham P.K."/>
            <person name="Rizzo M."/>
            <person name="Rooney T."/>
            <person name="Rowley D."/>
            <person name="Sakano H."/>
            <person name="Salzberg S.L."/>
            <person name="Schwartz J.R."/>
            <person name="Shinn P."/>
            <person name="Southwick A.M."/>
            <person name="Sun H."/>
            <person name="Tallon L.J."/>
            <person name="Tambunga G."/>
            <person name="Toriumi M.J."/>
            <person name="Town C.D."/>
            <person name="Utterback T."/>
            <person name="Van Aken S."/>
            <person name="Vaysberg M."/>
            <person name="Vysotskaia V.S."/>
            <person name="Walker M."/>
            <person name="Wu D."/>
            <person name="Yu G."/>
            <person name="Fraser C.M."/>
            <person name="Venter J.C."/>
            <person name="Davis R.W."/>
        </authorList>
    </citation>
    <scope>NUCLEOTIDE SEQUENCE [LARGE SCALE GENOMIC DNA]</scope>
    <source>
        <strain>cv. Columbia</strain>
    </source>
</reference>
<reference key="3">
    <citation type="journal article" date="2017" name="Plant J.">
        <title>Araport11: a complete reannotation of the Arabidopsis thaliana reference genome.</title>
        <authorList>
            <person name="Cheng C.Y."/>
            <person name="Krishnakumar V."/>
            <person name="Chan A.P."/>
            <person name="Thibaud-Nissen F."/>
            <person name="Schobel S."/>
            <person name="Town C.D."/>
        </authorList>
    </citation>
    <scope>GENOME REANNOTATION</scope>
    <source>
        <strain>cv. Columbia</strain>
    </source>
</reference>
<reference key="4">
    <citation type="submission" date="2007-03" db="EMBL/GenBank/DDBJ databases">
        <title>Arabidopsis ORF clones.</title>
        <authorList>
            <person name="Kim C.J."/>
            <person name="Bautista V.R."/>
            <person name="Chen H."/>
            <person name="De Los Reyes C."/>
            <person name="Wu S.Y."/>
            <person name="Ecker J.R."/>
        </authorList>
    </citation>
    <scope>NUCLEOTIDE SEQUENCE [LARGE SCALE MRNA]</scope>
    <source>
        <strain>cv. Columbia</strain>
    </source>
</reference>
<reference key="5">
    <citation type="journal article" date="2006" name="Plant J.">
        <title>The WAG1 and WAG2 protein kinases negatively regulate root waving in Arabidopsis.</title>
        <authorList>
            <person name="Santner A.A."/>
            <person name="Watson J.C."/>
        </authorList>
    </citation>
    <scope>FUNCTION</scope>
    <scope>TISSUE SPECIFICITY</scope>
    <scope>DISRUPTION PHENOTYPE</scope>
</reference>
<reference key="6">
    <citation type="journal article" date="2008" name="Proc. Natl. Acad. Sci. U.S.A.">
        <title>NPY genes and AGC kinases define two key steps in auxin-mediated organogenesis in Arabidopsis.</title>
        <authorList>
            <person name="Cheng Y."/>
            <person name="Qin G."/>
            <person name="Dai X."/>
            <person name="Zhao Y."/>
        </authorList>
    </citation>
    <scope>FUNCTION</scope>
    <scope>DEVELOPMENTAL STAGE</scope>
</reference>
<reference key="7">
    <citation type="journal article" date="2010" name="Development">
        <title>Plasma membrane-bound AGC3 kinases phosphorylate PIN auxin carriers at TPRXS(N/S) motifs to direct apical PIN recycling.</title>
        <authorList>
            <person name="Dhonukshe P."/>
            <person name="Huang F."/>
            <person name="Galvan-Ampudia C.S."/>
            <person name="Mahonen A.P."/>
            <person name="Kleine-Vehn J."/>
            <person name="Xu J."/>
            <person name="Quint A."/>
            <person name="Prasad K."/>
            <person name="Friml J."/>
            <person name="Scheres B."/>
            <person name="Offringa R."/>
        </authorList>
    </citation>
    <scope>FUNCTION</scope>
    <scope>SUBCELLULAR LOCATION</scope>
</reference>
<dbReference type="EC" id="2.7.11.1"/>
<dbReference type="EMBL" id="AF082391">
    <property type="protein sequence ID" value="AAC78477.1"/>
    <property type="molecule type" value="Genomic_DNA"/>
</dbReference>
<dbReference type="EMBL" id="AC024260">
    <property type="protein sequence ID" value="AAG51984.1"/>
    <property type="molecule type" value="Genomic_DNA"/>
</dbReference>
<dbReference type="EMBL" id="CP002684">
    <property type="protein sequence ID" value="AEE32983.1"/>
    <property type="molecule type" value="Genomic_DNA"/>
</dbReference>
<dbReference type="EMBL" id="BT030386">
    <property type="protein sequence ID" value="ABO45689.1"/>
    <property type="molecule type" value="mRNA"/>
</dbReference>
<dbReference type="PIR" id="C96577">
    <property type="entry name" value="C96577"/>
</dbReference>
<dbReference type="RefSeq" id="NP_175774.1">
    <property type="nucleotide sequence ID" value="NM_104248.4"/>
</dbReference>
<dbReference type="SMR" id="Q9C8M5"/>
<dbReference type="FunCoup" id="Q9C8M5">
    <property type="interactions" value="1"/>
</dbReference>
<dbReference type="IntAct" id="Q9C8M5">
    <property type="interactions" value="1"/>
</dbReference>
<dbReference type="STRING" id="3702.Q9C8M5"/>
<dbReference type="GlyGen" id="Q9C8M5">
    <property type="glycosylation" value="1 site"/>
</dbReference>
<dbReference type="iPTMnet" id="Q9C8M5"/>
<dbReference type="PaxDb" id="3702-AT1G53700.1"/>
<dbReference type="EnsemblPlants" id="AT1G53700.1">
    <property type="protein sequence ID" value="AT1G53700.1"/>
    <property type="gene ID" value="AT1G53700"/>
</dbReference>
<dbReference type="GeneID" id="841807"/>
<dbReference type="Gramene" id="AT1G53700.1">
    <property type="protein sequence ID" value="AT1G53700.1"/>
    <property type="gene ID" value="AT1G53700"/>
</dbReference>
<dbReference type="KEGG" id="ath:AT1G53700"/>
<dbReference type="Araport" id="AT1G53700"/>
<dbReference type="TAIR" id="AT1G53700">
    <property type="gene designation" value="WAG1"/>
</dbReference>
<dbReference type="eggNOG" id="KOG0610">
    <property type="taxonomic scope" value="Eukaryota"/>
</dbReference>
<dbReference type="HOGENOM" id="CLU_000288_63_30_1"/>
<dbReference type="InParanoid" id="Q9C8M5"/>
<dbReference type="OMA" id="LWWALSH"/>
<dbReference type="OrthoDB" id="432483at2759"/>
<dbReference type="PhylomeDB" id="Q9C8M5"/>
<dbReference type="PRO" id="PR:Q9C8M5"/>
<dbReference type="Proteomes" id="UP000006548">
    <property type="component" value="Chromosome 1"/>
</dbReference>
<dbReference type="ExpressionAtlas" id="Q9C8M5">
    <property type="expression patterns" value="baseline and differential"/>
</dbReference>
<dbReference type="GO" id="GO:0005829">
    <property type="term" value="C:cytosol"/>
    <property type="evidence" value="ECO:0007669"/>
    <property type="project" value="UniProtKB-SubCell"/>
</dbReference>
<dbReference type="GO" id="GO:0005524">
    <property type="term" value="F:ATP binding"/>
    <property type="evidence" value="ECO:0007669"/>
    <property type="project" value="UniProtKB-KW"/>
</dbReference>
<dbReference type="GO" id="GO:0016301">
    <property type="term" value="F:kinase activity"/>
    <property type="evidence" value="ECO:0000250"/>
    <property type="project" value="TAIR"/>
</dbReference>
<dbReference type="GO" id="GO:0106310">
    <property type="term" value="F:protein serine kinase activity"/>
    <property type="evidence" value="ECO:0007669"/>
    <property type="project" value="RHEA"/>
</dbReference>
<dbReference type="GO" id="GO:0004674">
    <property type="term" value="F:protein serine/threonine kinase activity"/>
    <property type="evidence" value="ECO:0000250"/>
    <property type="project" value="TAIR"/>
</dbReference>
<dbReference type="GO" id="GO:0009926">
    <property type="term" value="P:auxin polar transport"/>
    <property type="evidence" value="ECO:0000315"/>
    <property type="project" value="TAIR"/>
</dbReference>
<dbReference type="GO" id="GO:0009734">
    <property type="term" value="P:auxin-activated signaling pathway"/>
    <property type="evidence" value="ECO:0007669"/>
    <property type="project" value="UniProtKB-KW"/>
</dbReference>
<dbReference type="GO" id="GO:0048825">
    <property type="term" value="P:cotyledon development"/>
    <property type="evidence" value="ECO:0000316"/>
    <property type="project" value="TAIR"/>
</dbReference>
<dbReference type="CDD" id="cd05574">
    <property type="entry name" value="STKc_phototropin_like"/>
    <property type="match status" value="1"/>
</dbReference>
<dbReference type="FunFam" id="1.10.510.10:FF:000312">
    <property type="entry name" value="Serine/threonine-protein kinase OXI1"/>
    <property type="match status" value="1"/>
</dbReference>
<dbReference type="FunFam" id="1.10.510.10:FF:000662">
    <property type="entry name" value="Serine/threonine-protein kinase WAG2"/>
    <property type="match status" value="1"/>
</dbReference>
<dbReference type="FunFam" id="3.30.200.20:FF:000438">
    <property type="entry name" value="Serine/threonine-protein kinase WAG2"/>
    <property type="match status" value="1"/>
</dbReference>
<dbReference type="Gene3D" id="3.30.200.20">
    <property type="entry name" value="Phosphorylase Kinase, domain 1"/>
    <property type="match status" value="1"/>
</dbReference>
<dbReference type="Gene3D" id="1.10.510.10">
    <property type="entry name" value="Transferase(Phosphotransferase) domain 1"/>
    <property type="match status" value="2"/>
</dbReference>
<dbReference type="InterPro" id="IPR011009">
    <property type="entry name" value="Kinase-like_dom_sf"/>
</dbReference>
<dbReference type="InterPro" id="IPR000719">
    <property type="entry name" value="Prot_kinase_dom"/>
</dbReference>
<dbReference type="InterPro" id="IPR008271">
    <property type="entry name" value="Ser/Thr_kinase_AS"/>
</dbReference>
<dbReference type="PANTHER" id="PTHR45637">
    <property type="entry name" value="FLIPPASE KINASE 1-RELATED"/>
    <property type="match status" value="1"/>
</dbReference>
<dbReference type="Pfam" id="PF00069">
    <property type="entry name" value="Pkinase"/>
    <property type="match status" value="2"/>
</dbReference>
<dbReference type="SMART" id="SM00220">
    <property type="entry name" value="S_TKc"/>
    <property type="match status" value="1"/>
</dbReference>
<dbReference type="SUPFAM" id="SSF56112">
    <property type="entry name" value="Protein kinase-like (PK-like)"/>
    <property type="match status" value="1"/>
</dbReference>
<dbReference type="PROSITE" id="PS50011">
    <property type="entry name" value="PROTEIN_KINASE_DOM"/>
    <property type="match status" value="1"/>
</dbReference>
<dbReference type="PROSITE" id="PS00108">
    <property type="entry name" value="PROTEIN_KINASE_ST"/>
    <property type="match status" value="1"/>
</dbReference>
<comment type="function">
    <text evidence="3 4 5">Serine/threonine-protein kinase involved in the regulation of auxin signaling. Acts as a positive regulator of cellular auxin efflux and regulates organ development by enhancing PIN-mediated polar auxin transport. Phosphorylates conserved serine residues in the PIN auxin efflux carriers. Phosphorylation of PIN proteins is required and sufficient for apical-basal PIN polarity that enables directional intercellular auxin fluxes, which mediate differential growth, tissue patterning and organogenesis. Acts as a suppressor of root waving.</text>
</comment>
<comment type="catalytic activity">
    <reaction>
        <text>L-seryl-[protein] + ATP = O-phospho-L-seryl-[protein] + ADP + H(+)</text>
        <dbReference type="Rhea" id="RHEA:17989"/>
        <dbReference type="Rhea" id="RHEA-COMP:9863"/>
        <dbReference type="Rhea" id="RHEA-COMP:11604"/>
        <dbReference type="ChEBI" id="CHEBI:15378"/>
        <dbReference type="ChEBI" id="CHEBI:29999"/>
        <dbReference type="ChEBI" id="CHEBI:30616"/>
        <dbReference type="ChEBI" id="CHEBI:83421"/>
        <dbReference type="ChEBI" id="CHEBI:456216"/>
        <dbReference type="EC" id="2.7.11.1"/>
    </reaction>
</comment>
<comment type="catalytic activity">
    <reaction>
        <text>L-threonyl-[protein] + ATP = O-phospho-L-threonyl-[protein] + ADP + H(+)</text>
        <dbReference type="Rhea" id="RHEA:46608"/>
        <dbReference type="Rhea" id="RHEA-COMP:11060"/>
        <dbReference type="Rhea" id="RHEA-COMP:11605"/>
        <dbReference type="ChEBI" id="CHEBI:15378"/>
        <dbReference type="ChEBI" id="CHEBI:30013"/>
        <dbReference type="ChEBI" id="CHEBI:30616"/>
        <dbReference type="ChEBI" id="CHEBI:61977"/>
        <dbReference type="ChEBI" id="CHEBI:456216"/>
        <dbReference type="EC" id="2.7.11.1"/>
    </reaction>
</comment>
<comment type="subcellular location">
    <subcellularLocation>
        <location evidence="5">Cytoplasm</location>
        <location evidence="5">Cytosol</location>
    </subcellularLocation>
    <text>Targeted to the cell periphery.</text>
</comment>
<comment type="tissue specificity">
    <text evidence="3">Expressed in root tips and lateral root primordia.</text>
</comment>
<comment type="developmental stage">
    <text evidence="4">Expressed throughout embryogenesis with higher expression in the cotyledon primordia at heart stages.</text>
</comment>
<comment type="disruption phenotype">
    <text evidence="3">Enhanced root waving when grown on agar plates.</text>
</comment>
<comment type="miscellaneous">
    <text evidence="7">Over-expression of WAG1 induces a basal-to-apical shift in PIN1, PIN2 and PIN4 localization, resulting in the loss of auxin gradients and strong defects in embryo and seedling roots.</text>
</comment>
<comment type="similarity">
    <text evidence="1">Belongs to the protein kinase superfamily. Ser/Thr protein kinase family.</text>
</comment>
<accession>Q9C8M5</accession>
<accession>O81661</accession>